<organism>
    <name type="scientific">Microcystis aeruginosa (strain NIES-843 / IAM M-2473)</name>
    <dbReference type="NCBI Taxonomy" id="449447"/>
    <lineage>
        <taxon>Bacteria</taxon>
        <taxon>Bacillati</taxon>
        <taxon>Cyanobacteriota</taxon>
        <taxon>Cyanophyceae</taxon>
        <taxon>Oscillatoriophycideae</taxon>
        <taxon>Chroococcales</taxon>
        <taxon>Microcystaceae</taxon>
        <taxon>Microcystis</taxon>
    </lineage>
</organism>
<name>HIS5_MICAN</name>
<dbReference type="EC" id="4.3.2.10" evidence="1"/>
<dbReference type="EC" id="3.5.1.2" evidence="1"/>
<dbReference type="EMBL" id="AP009552">
    <property type="protein sequence ID" value="BAF99853.1"/>
    <property type="molecule type" value="Genomic_DNA"/>
</dbReference>
<dbReference type="RefSeq" id="WP_002795703.1">
    <property type="nucleotide sequence ID" value="NC_010296.1"/>
</dbReference>
<dbReference type="SMR" id="B0JFQ9"/>
<dbReference type="STRING" id="449447.MAE_00320"/>
<dbReference type="PaxDb" id="449447-MAE_00320"/>
<dbReference type="EnsemblBacteria" id="BAF99853">
    <property type="protein sequence ID" value="BAF99853"/>
    <property type="gene ID" value="MAE_00320"/>
</dbReference>
<dbReference type="KEGG" id="mar:MAE_00320"/>
<dbReference type="eggNOG" id="COG0118">
    <property type="taxonomic scope" value="Bacteria"/>
</dbReference>
<dbReference type="HOGENOM" id="CLU_071837_2_2_3"/>
<dbReference type="BioCyc" id="MAER449447:MAE_RS00155-MONOMER"/>
<dbReference type="UniPathway" id="UPA00031">
    <property type="reaction ID" value="UER00010"/>
</dbReference>
<dbReference type="Proteomes" id="UP000001510">
    <property type="component" value="Chromosome"/>
</dbReference>
<dbReference type="GO" id="GO:0005737">
    <property type="term" value="C:cytoplasm"/>
    <property type="evidence" value="ECO:0007669"/>
    <property type="project" value="UniProtKB-SubCell"/>
</dbReference>
<dbReference type="GO" id="GO:0004359">
    <property type="term" value="F:glutaminase activity"/>
    <property type="evidence" value="ECO:0007669"/>
    <property type="project" value="UniProtKB-EC"/>
</dbReference>
<dbReference type="GO" id="GO:0000107">
    <property type="term" value="F:imidazoleglycerol-phosphate synthase activity"/>
    <property type="evidence" value="ECO:0007669"/>
    <property type="project" value="UniProtKB-UniRule"/>
</dbReference>
<dbReference type="GO" id="GO:0016829">
    <property type="term" value="F:lyase activity"/>
    <property type="evidence" value="ECO:0007669"/>
    <property type="project" value="UniProtKB-KW"/>
</dbReference>
<dbReference type="GO" id="GO:0000105">
    <property type="term" value="P:L-histidine biosynthetic process"/>
    <property type="evidence" value="ECO:0007669"/>
    <property type="project" value="UniProtKB-UniRule"/>
</dbReference>
<dbReference type="CDD" id="cd01748">
    <property type="entry name" value="GATase1_IGP_Synthase"/>
    <property type="match status" value="1"/>
</dbReference>
<dbReference type="FunFam" id="3.40.50.880:FF:000009">
    <property type="entry name" value="Imidazole glycerol phosphate synthase subunit HisH"/>
    <property type="match status" value="1"/>
</dbReference>
<dbReference type="Gene3D" id="3.40.50.880">
    <property type="match status" value="1"/>
</dbReference>
<dbReference type="HAMAP" id="MF_00278">
    <property type="entry name" value="HisH"/>
    <property type="match status" value="1"/>
</dbReference>
<dbReference type="InterPro" id="IPR029062">
    <property type="entry name" value="Class_I_gatase-like"/>
</dbReference>
<dbReference type="InterPro" id="IPR017926">
    <property type="entry name" value="GATASE"/>
</dbReference>
<dbReference type="InterPro" id="IPR010139">
    <property type="entry name" value="Imidazole-glycPsynth_HisH"/>
</dbReference>
<dbReference type="NCBIfam" id="TIGR01855">
    <property type="entry name" value="IMP_synth_hisH"/>
    <property type="match status" value="1"/>
</dbReference>
<dbReference type="PANTHER" id="PTHR42701">
    <property type="entry name" value="IMIDAZOLE GLYCEROL PHOSPHATE SYNTHASE SUBUNIT HISH"/>
    <property type="match status" value="1"/>
</dbReference>
<dbReference type="PANTHER" id="PTHR42701:SF1">
    <property type="entry name" value="IMIDAZOLE GLYCEROL PHOSPHATE SYNTHASE SUBUNIT HISH"/>
    <property type="match status" value="1"/>
</dbReference>
<dbReference type="Pfam" id="PF00117">
    <property type="entry name" value="GATase"/>
    <property type="match status" value="1"/>
</dbReference>
<dbReference type="PIRSF" id="PIRSF000495">
    <property type="entry name" value="Amidotransf_hisH"/>
    <property type="match status" value="1"/>
</dbReference>
<dbReference type="SUPFAM" id="SSF52317">
    <property type="entry name" value="Class I glutamine amidotransferase-like"/>
    <property type="match status" value="1"/>
</dbReference>
<dbReference type="PROSITE" id="PS51273">
    <property type="entry name" value="GATASE_TYPE_1"/>
    <property type="match status" value="1"/>
</dbReference>
<gene>
    <name evidence="1" type="primary">hisH</name>
    <name type="ordered locus">MAE_00320</name>
</gene>
<proteinExistence type="inferred from homology"/>
<keyword id="KW-0028">Amino-acid biosynthesis</keyword>
<keyword id="KW-0963">Cytoplasm</keyword>
<keyword id="KW-0315">Glutamine amidotransferase</keyword>
<keyword id="KW-0368">Histidine biosynthesis</keyword>
<keyword id="KW-0378">Hydrolase</keyword>
<keyword id="KW-0456">Lyase</keyword>
<protein>
    <recommendedName>
        <fullName evidence="1">Imidazole glycerol phosphate synthase subunit HisH</fullName>
        <ecNumber evidence="1">4.3.2.10</ecNumber>
    </recommendedName>
    <alternativeName>
        <fullName evidence="1">IGP synthase glutaminase subunit</fullName>
        <ecNumber evidence="1">3.5.1.2</ecNumber>
    </alternativeName>
    <alternativeName>
        <fullName evidence="1">IGP synthase subunit HisH</fullName>
    </alternativeName>
    <alternativeName>
        <fullName evidence="1">ImGP synthase subunit HisH</fullName>
        <shortName evidence="1">IGPS subunit HisH</shortName>
    </alternativeName>
</protein>
<feature type="chain" id="PRO_1000114785" description="Imidazole glycerol phosphate synthase subunit HisH">
    <location>
        <begin position="1"/>
        <end position="212"/>
    </location>
</feature>
<feature type="domain" description="Glutamine amidotransferase type-1" evidence="1">
    <location>
        <begin position="3"/>
        <end position="211"/>
    </location>
</feature>
<feature type="active site" description="Nucleophile" evidence="1">
    <location>
        <position position="81"/>
    </location>
</feature>
<feature type="active site" evidence="1">
    <location>
        <position position="186"/>
    </location>
</feature>
<feature type="active site" evidence="1">
    <location>
        <position position="188"/>
    </location>
</feature>
<reference key="1">
    <citation type="journal article" date="2007" name="DNA Res.">
        <title>Complete genomic structure of the bloom-forming toxic cyanobacterium Microcystis aeruginosa NIES-843.</title>
        <authorList>
            <person name="Kaneko T."/>
            <person name="Nakajima N."/>
            <person name="Okamoto S."/>
            <person name="Suzuki I."/>
            <person name="Tanabe Y."/>
            <person name="Tamaoki M."/>
            <person name="Nakamura Y."/>
            <person name="Kasai F."/>
            <person name="Watanabe A."/>
            <person name="Kawashima K."/>
            <person name="Kishida Y."/>
            <person name="Ono A."/>
            <person name="Shimizu Y."/>
            <person name="Takahashi C."/>
            <person name="Minami C."/>
            <person name="Fujishiro T."/>
            <person name="Kohara M."/>
            <person name="Katoh M."/>
            <person name="Nakazaki N."/>
            <person name="Nakayama S."/>
            <person name="Yamada M."/>
            <person name="Tabata S."/>
            <person name="Watanabe M.M."/>
        </authorList>
    </citation>
    <scope>NUCLEOTIDE SEQUENCE [LARGE SCALE GENOMIC DNA]</scope>
    <source>
        <strain>NIES-843 / IAM M-247</strain>
    </source>
</reference>
<sequence>MTLIAVIDYDMGNLHSACKGLETVGAVPKITDSPLDLEKADAIVLPGVGSFDPAVRQIRSRHLEKPIKAAIANGKPFLGICLGLQILFETSEEGQEAGLGIIPGTVRRFRSEPGITIPHMGWNQLDFTQPDHALWQGLPPHPHVYFVHSYYVDPLDSHLTAATVTHGSQTVTAAIARDRLVAVQFHPEKSSTNGLKILANFVQQVQKLALVS</sequence>
<accession>B0JFQ9</accession>
<comment type="function">
    <text evidence="1">IGPS catalyzes the conversion of PRFAR and glutamine to IGP, AICAR and glutamate. The HisH subunit catalyzes the hydrolysis of glutamine to glutamate and ammonia as part of the synthesis of IGP and AICAR. The resulting ammonia molecule is channeled to the active site of HisF.</text>
</comment>
<comment type="catalytic activity">
    <reaction evidence="1">
        <text>5-[(5-phospho-1-deoxy-D-ribulos-1-ylimino)methylamino]-1-(5-phospho-beta-D-ribosyl)imidazole-4-carboxamide + L-glutamine = D-erythro-1-(imidazol-4-yl)glycerol 3-phosphate + 5-amino-1-(5-phospho-beta-D-ribosyl)imidazole-4-carboxamide + L-glutamate + H(+)</text>
        <dbReference type="Rhea" id="RHEA:24793"/>
        <dbReference type="ChEBI" id="CHEBI:15378"/>
        <dbReference type="ChEBI" id="CHEBI:29985"/>
        <dbReference type="ChEBI" id="CHEBI:58278"/>
        <dbReference type="ChEBI" id="CHEBI:58359"/>
        <dbReference type="ChEBI" id="CHEBI:58475"/>
        <dbReference type="ChEBI" id="CHEBI:58525"/>
        <dbReference type="EC" id="4.3.2.10"/>
    </reaction>
</comment>
<comment type="catalytic activity">
    <reaction evidence="1">
        <text>L-glutamine + H2O = L-glutamate + NH4(+)</text>
        <dbReference type="Rhea" id="RHEA:15889"/>
        <dbReference type="ChEBI" id="CHEBI:15377"/>
        <dbReference type="ChEBI" id="CHEBI:28938"/>
        <dbReference type="ChEBI" id="CHEBI:29985"/>
        <dbReference type="ChEBI" id="CHEBI:58359"/>
        <dbReference type="EC" id="3.5.1.2"/>
    </reaction>
</comment>
<comment type="pathway">
    <text evidence="1">Amino-acid biosynthesis; L-histidine biosynthesis; L-histidine from 5-phospho-alpha-D-ribose 1-diphosphate: step 5/9.</text>
</comment>
<comment type="subunit">
    <text evidence="1">Heterodimer of HisH and HisF.</text>
</comment>
<comment type="subcellular location">
    <subcellularLocation>
        <location evidence="1">Cytoplasm</location>
    </subcellularLocation>
</comment>
<evidence type="ECO:0000255" key="1">
    <source>
        <dbReference type="HAMAP-Rule" id="MF_00278"/>
    </source>
</evidence>